<sequence length="65" mass="7436">MPNPDNRSDNAEKLQEMVQNTVDNFNEAKETAELSNEKDRAAIEAKNQRRLESIDSLKSEIKDES</sequence>
<proteinExistence type="inferred from homology"/>
<organism>
    <name type="scientific">Bacillus cereus (strain B4264)</name>
    <dbReference type="NCBI Taxonomy" id="405532"/>
    <lineage>
        <taxon>Bacteria</taxon>
        <taxon>Bacillati</taxon>
        <taxon>Bacillota</taxon>
        <taxon>Bacilli</taxon>
        <taxon>Bacillales</taxon>
        <taxon>Bacillaceae</taxon>
        <taxon>Bacillus</taxon>
        <taxon>Bacillus cereus group</taxon>
    </lineage>
</organism>
<comment type="subcellular location">
    <subcellularLocation>
        <location evidence="1">Spore core</location>
    </subcellularLocation>
</comment>
<comment type="induction">
    <text evidence="1">Expressed only in the forespore compartment of sporulating cells.</text>
</comment>
<comment type="similarity">
    <text evidence="1">Belongs to the Tlp family.</text>
</comment>
<dbReference type="EMBL" id="CP001176">
    <property type="protein sequence ID" value="ACK62222.1"/>
    <property type="molecule type" value="Genomic_DNA"/>
</dbReference>
<dbReference type="RefSeq" id="WP_001133511.1">
    <property type="nucleotide sequence ID" value="NZ_VEHB01000002.1"/>
</dbReference>
<dbReference type="SMR" id="B7HAY0"/>
<dbReference type="KEGG" id="bcb:BCB4264_A3716"/>
<dbReference type="HOGENOM" id="CLU_178266_1_0_9"/>
<dbReference type="Proteomes" id="UP000007096">
    <property type="component" value="Chromosome"/>
</dbReference>
<dbReference type="GO" id="GO:0030436">
    <property type="term" value="P:asexual sporulation"/>
    <property type="evidence" value="ECO:0007669"/>
    <property type="project" value="UniProtKB-UniRule"/>
</dbReference>
<dbReference type="GO" id="GO:0030435">
    <property type="term" value="P:sporulation resulting in formation of a cellular spore"/>
    <property type="evidence" value="ECO:0007669"/>
    <property type="project" value="UniProtKB-KW"/>
</dbReference>
<dbReference type="HAMAP" id="MF_01506">
    <property type="entry name" value="Tlp"/>
    <property type="match status" value="1"/>
</dbReference>
<dbReference type="InterPro" id="IPR017524">
    <property type="entry name" value="SASP_thioredoxin-like"/>
</dbReference>
<dbReference type="NCBIfam" id="TIGR03090">
    <property type="entry name" value="SASP_tlp"/>
    <property type="match status" value="1"/>
</dbReference>
<dbReference type="Pfam" id="PF19824">
    <property type="entry name" value="Tlp"/>
    <property type="match status" value="1"/>
</dbReference>
<evidence type="ECO:0000255" key="1">
    <source>
        <dbReference type="HAMAP-Rule" id="MF_01506"/>
    </source>
</evidence>
<accession>B7HAY0</accession>
<name>TLP_BACC4</name>
<feature type="chain" id="PRO_1000196950" description="Small, acid-soluble spore protein Tlp">
    <location>
        <begin position="1"/>
        <end position="65"/>
    </location>
</feature>
<gene>
    <name evidence="1" type="primary">tlp</name>
    <name type="ordered locus">BCB4264_A3716</name>
</gene>
<protein>
    <recommendedName>
        <fullName evidence="1">Small, acid-soluble spore protein Tlp</fullName>
    </recommendedName>
</protein>
<reference key="1">
    <citation type="submission" date="2008-10" db="EMBL/GenBank/DDBJ databases">
        <title>Genome sequence of Bacillus cereus B4264.</title>
        <authorList>
            <person name="Dodson R.J."/>
            <person name="Durkin A.S."/>
            <person name="Rosovitz M.J."/>
            <person name="Rasko D.A."/>
            <person name="Hoffmaster A."/>
            <person name="Ravel J."/>
            <person name="Sutton G."/>
        </authorList>
    </citation>
    <scope>NUCLEOTIDE SEQUENCE [LARGE SCALE GENOMIC DNA]</scope>
    <source>
        <strain>B4264</strain>
    </source>
</reference>
<keyword id="KW-0749">Sporulation</keyword>